<accession>P62331</accession>
<accession>P26438</accession>
<name>ARF6_MOUSE</name>
<dbReference type="EC" id="3.6.5.2" evidence="1"/>
<dbReference type="EMBL" id="D87903">
    <property type="protein sequence ID" value="BAA13495.1"/>
    <property type="molecule type" value="mRNA"/>
</dbReference>
<dbReference type="EMBL" id="BC003478">
    <property type="protein sequence ID" value="AAH03478.1"/>
    <property type="molecule type" value="mRNA"/>
</dbReference>
<dbReference type="EMBL" id="BC083112">
    <property type="protein sequence ID" value="AAH83112.1"/>
    <property type="molecule type" value="mRNA"/>
</dbReference>
<dbReference type="CCDS" id="CCDS25952.1"/>
<dbReference type="PIR" id="JC4950">
    <property type="entry name" value="JC4950"/>
</dbReference>
<dbReference type="RefSeq" id="NP_031507.1">
    <property type="nucleotide sequence ID" value="NM_007481.3"/>
</dbReference>
<dbReference type="PDB" id="3VHX">
    <property type="method" value="X-ray"/>
    <property type="resolution" value="2.81 A"/>
    <property type="chains" value="A/C/E/G=13-175"/>
</dbReference>
<dbReference type="PDBsum" id="3VHX"/>
<dbReference type="SMR" id="P62331"/>
<dbReference type="BioGRID" id="198189">
    <property type="interactions" value="20"/>
</dbReference>
<dbReference type="FunCoup" id="P62331">
    <property type="interactions" value="3012"/>
</dbReference>
<dbReference type="IntAct" id="P62331">
    <property type="interactions" value="11"/>
</dbReference>
<dbReference type="MINT" id="P62331"/>
<dbReference type="STRING" id="10090.ENSMUSP00000055862"/>
<dbReference type="ChEMBL" id="CHEMBL1075274"/>
<dbReference type="iPTMnet" id="P62331"/>
<dbReference type="PhosphoSitePlus" id="P62331"/>
<dbReference type="SwissPalm" id="P62331"/>
<dbReference type="jPOST" id="P62331"/>
<dbReference type="PaxDb" id="10090-ENSMUSP00000055862"/>
<dbReference type="PeptideAtlas" id="P62331"/>
<dbReference type="ProteomicsDB" id="273921"/>
<dbReference type="Pumba" id="P62331"/>
<dbReference type="Antibodypedia" id="3459">
    <property type="antibodies" value="464 antibodies from 38 providers"/>
</dbReference>
<dbReference type="DNASU" id="11845"/>
<dbReference type="Ensembl" id="ENSMUST00000050063.9">
    <property type="protein sequence ID" value="ENSMUSP00000055862.8"/>
    <property type="gene ID" value="ENSMUSG00000044147.9"/>
</dbReference>
<dbReference type="GeneID" id="11845"/>
<dbReference type="KEGG" id="mmu:11845"/>
<dbReference type="UCSC" id="uc007nsj.1">
    <property type="organism name" value="mouse"/>
</dbReference>
<dbReference type="AGR" id="MGI:99435"/>
<dbReference type="CTD" id="382"/>
<dbReference type="MGI" id="MGI:99435">
    <property type="gene designation" value="Arf6"/>
</dbReference>
<dbReference type="VEuPathDB" id="HostDB:ENSMUSG00000044147"/>
<dbReference type="eggNOG" id="KOG0071">
    <property type="taxonomic scope" value="Eukaryota"/>
</dbReference>
<dbReference type="GeneTree" id="ENSGT00940000156593"/>
<dbReference type="HOGENOM" id="CLU_040729_9_4_1"/>
<dbReference type="InParanoid" id="P62331"/>
<dbReference type="OMA" id="GGQISKM"/>
<dbReference type="OrthoDB" id="2011769at2759"/>
<dbReference type="PhylomeDB" id="P62331"/>
<dbReference type="TreeFam" id="TF300808"/>
<dbReference type="BRENDA" id="3.6.5.2">
    <property type="organism ID" value="3474"/>
</dbReference>
<dbReference type="Reactome" id="R-MMU-8854214">
    <property type="pathway name" value="TBC/RABGAPs"/>
</dbReference>
<dbReference type="Reactome" id="R-MMU-8856828">
    <property type="pathway name" value="Clathrin-mediated endocytosis"/>
</dbReference>
<dbReference type="Reactome" id="R-MMU-8875656">
    <property type="pathway name" value="MET receptor recycling"/>
</dbReference>
<dbReference type="BioGRID-ORCS" id="11845">
    <property type="hits" value="11 hits in 80 CRISPR screens"/>
</dbReference>
<dbReference type="CD-CODE" id="CE726F99">
    <property type="entry name" value="Postsynaptic density"/>
</dbReference>
<dbReference type="ChiTaRS" id="Arf6">
    <property type="organism name" value="mouse"/>
</dbReference>
<dbReference type="EvolutionaryTrace" id="P62331"/>
<dbReference type="PRO" id="PR:P62331"/>
<dbReference type="Proteomes" id="UP000000589">
    <property type="component" value="Chromosome 12"/>
</dbReference>
<dbReference type="RNAct" id="P62331">
    <property type="molecule type" value="protein"/>
</dbReference>
<dbReference type="Bgee" id="ENSMUSG00000044147">
    <property type="expression patterns" value="Expressed in conjunctival fornix and 288 other cell types or tissues"/>
</dbReference>
<dbReference type="ExpressionAtlas" id="P62331">
    <property type="expression patterns" value="baseline and differential"/>
</dbReference>
<dbReference type="GO" id="GO:0005938">
    <property type="term" value="C:cell cortex"/>
    <property type="evidence" value="ECO:0007669"/>
    <property type="project" value="Ensembl"/>
</dbReference>
<dbReference type="GO" id="GO:0032154">
    <property type="term" value="C:cleavage furrow"/>
    <property type="evidence" value="ECO:0000250"/>
    <property type="project" value="UniProtKB"/>
</dbReference>
<dbReference type="GO" id="GO:0005737">
    <property type="term" value="C:cytoplasm"/>
    <property type="evidence" value="ECO:0000314"/>
    <property type="project" value="MGI"/>
</dbReference>
<dbReference type="GO" id="GO:0005829">
    <property type="term" value="C:cytosol"/>
    <property type="evidence" value="ECO:0007669"/>
    <property type="project" value="UniProtKB-SubCell"/>
</dbReference>
<dbReference type="GO" id="GO:0031901">
    <property type="term" value="C:early endosome membrane"/>
    <property type="evidence" value="ECO:0007669"/>
    <property type="project" value="UniProtKB-SubCell"/>
</dbReference>
<dbReference type="GO" id="GO:0030139">
    <property type="term" value="C:endocytic vesicle"/>
    <property type="evidence" value="ECO:0000250"/>
    <property type="project" value="UniProtKB"/>
</dbReference>
<dbReference type="GO" id="GO:0005768">
    <property type="term" value="C:endosome"/>
    <property type="evidence" value="ECO:0000314"/>
    <property type="project" value="BHF-UCL"/>
</dbReference>
<dbReference type="GO" id="GO:0031527">
    <property type="term" value="C:filopodium membrane"/>
    <property type="evidence" value="ECO:0007669"/>
    <property type="project" value="UniProtKB-SubCell"/>
</dbReference>
<dbReference type="GO" id="GO:0090543">
    <property type="term" value="C:Flemming body"/>
    <property type="evidence" value="ECO:0000250"/>
    <property type="project" value="UniProtKB"/>
</dbReference>
<dbReference type="GO" id="GO:0098978">
    <property type="term" value="C:glutamatergic synapse"/>
    <property type="evidence" value="ECO:0007669"/>
    <property type="project" value="Ensembl"/>
</dbReference>
<dbReference type="GO" id="GO:0005794">
    <property type="term" value="C:Golgi apparatus"/>
    <property type="evidence" value="ECO:0007669"/>
    <property type="project" value="UniProtKB-SubCell"/>
</dbReference>
<dbReference type="GO" id="GO:0043209">
    <property type="term" value="C:myelin sheath"/>
    <property type="evidence" value="ECO:0007005"/>
    <property type="project" value="UniProtKB"/>
</dbReference>
<dbReference type="GO" id="GO:0005886">
    <property type="term" value="C:plasma membrane"/>
    <property type="evidence" value="ECO:0000314"/>
    <property type="project" value="MGI"/>
</dbReference>
<dbReference type="GO" id="GO:0098794">
    <property type="term" value="C:postsynapse"/>
    <property type="evidence" value="ECO:0007669"/>
    <property type="project" value="Ensembl"/>
</dbReference>
<dbReference type="GO" id="GO:0098793">
    <property type="term" value="C:presynapse"/>
    <property type="evidence" value="ECO:0007669"/>
    <property type="project" value="Ensembl"/>
</dbReference>
<dbReference type="GO" id="GO:0055038">
    <property type="term" value="C:recycling endosome membrane"/>
    <property type="evidence" value="ECO:0000250"/>
    <property type="project" value="UniProtKB"/>
</dbReference>
<dbReference type="GO" id="GO:0001726">
    <property type="term" value="C:ruffle"/>
    <property type="evidence" value="ECO:0007669"/>
    <property type="project" value="UniProtKB-SubCell"/>
</dbReference>
<dbReference type="GO" id="GO:0003925">
    <property type="term" value="F:G protein activity"/>
    <property type="evidence" value="ECO:0007669"/>
    <property type="project" value="Ensembl"/>
</dbReference>
<dbReference type="GO" id="GO:0019003">
    <property type="term" value="F:GDP binding"/>
    <property type="evidence" value="ECO:0007669"/>
    <property type="project" value="Ensembl"/>
</dbReference>
<dbReference type="GO" id="GO:0005525">
    <property type="term" value="F:GTP binding"/>
    <property type="evidence" value="ECO:0000304"/>
    <property type="project" value="BHF-UCL"/>
</dbReference>
<dbReference type="GO" id="GO:0003924">
    <property type="term" value="F:GTPase activity"/>
    <property type="evidence" value="ECO:0000304"/>
    <property type="project" value="BHF-UCL"/>
</dbReference>
<dbReference type="GO" id="GO:0035591">
    <property type="term" value="F:signaling adaptor activity"/>
    <property type="evidence" value="ECO:0007669"/>
    <property type="project" value="Ensembl"/>
</dbReference>
<dbReference type="GO" id="GO:0031996">
    <property type="term" value="F:thioesterase binding"/>
    <property type="evidence" value="ECO:0007669"/>
    <property type="project" value="Ensembl"/>
</dbReference>
<dbReference type="GO" id="GO:0030154">
    <property type="term" value="P:cell differentiation"/>
    <property type="evidence" value="ECO:0007669"/>
    <property type="project" value="UniProtKB-KW"/>
</dbReference>
<dbReference type="GO" id="GO:0051301">
    <property type="term" value="P:cell division"/>
    <property type="evidence" value="ECO:0007669"/>
    <property type="project" value="UniProtKB-KW"/>
</dbReference>
<dbReference type="GO" id="GO:1990090">
    <property type="term" value="P:cellular response to nerve growth factor stimulus"/>
    <property type="evidence" value="ECO:0007669"/>
    <property type="project" value="Ensembl"/>
</dbReference>
<dbReference type="GO" id="GO:0030866">
    <property type="term" value="P:cortical actin cytoskeleton organization"/>
    <property type="evidence" value="ECO:0007669"/>
    <property type="project" value="Ensembl"/>
</dbReference>
<dbReference type="GO" id="GO:0032456">
    <property type="term" value="P:endocytic recycling"/>
    <property type="evidence" value="ECO:0007669"/>
    <property type="project" value="Ensembl"/>
</dbReference>
<dbReference type="GO" id="GO:1902217">
    <property type="term" value="P:erythrocyte apoptotic process"/>
    <property type="evidence" value="ECO:0000315"/>
    <property type="project" value="MGI"/>
</dbReference>
<dbReference type="GO" id="GO:0090162">
    <property type="term" value="P:establishment of epithelial cell polarity"/>
    <property type="evidence" value="ECO:0000315"/>
    <property type="project" value="MGI"/>
</dbReference>
<dbReference type="GO" id="GO:0097284">
    <property type="term" value="P:hepatocyte apoptotic process"/>
    <property type="evidence" value="ECO:0000315"/>
    <property type="project" value="MGI"/>
</dbReference>
<dbReference type="GO" id="GO:0001889">
    <property type="term" value="P:liver development"/>
    <property type="evidence" value="ECO:0000315"/>
    <property type="project" value="MGI"/>
</dbReference>
<dbReference type="GO" id="GO:0099562">
    <property type="term" value="P:maintenance of postsynaptic density structure"/>
    <property type="evidence" value="ECO:0007669"/>
    <property type="project" value="Ensembl"/>
</dbReference>
<dbReference type="GO" id="GO:2000171">
    <property type="term" value="P:negative regulation of dendrite development"/>
    <property type="evidence" value="ECO:0007669"/>
    <property type="project" value="Ensembl"/>
</dbReference>
<dbReference type="GO" id="GO:2000009">
    <property type="term" value="P:negative regulation of protein localization to cell surface"/>
    <property type="evidence" value="ECO:0000314"/>
    <property type="project" value="UniProtKB"/>
</dbReference>
<dbReference type="GO" id="GO:0007399">
    <property type="term" value="P:nervous system development"/>
    <property type="evidence" value="ECO:0007669"/>
    <property type="project" value="UniProtKB-KW"/>
</dbReference>
<dbReference type="GO" id="GO:0030838">
    <property type="term" value="P:positive regulation of actin filament polymerization"/>
    <property type="evidence" value="ECO:0007669"/>
    <property type="project" value="Ensembl"/>
</dbReference>
<dbReference type="GO" id="GO:0120183">
    <property type="term" value="P:positive regulation of focal adhesion disassembly"/>
    <property type="evidence" value="ECO:0000315"/>
    <property type="project" value="ARUK-UCL"/>
</dbReference>
<dbReference type="GO" id="GO:0051549">
    <property type="term" value="P:positive regulation of keratinocyte migration"/>
    <property type="evidence" value="ECO:0000315"/>
    <property type="project" value="ARUK-UCL"/>
</dbReference>
<dbReference type="GO" id="GO:1903438">
    <property type="term" value="P:positive regulation of mitotic cytokinetic process"/>
    <property type="evidence" value="ECO:0007669"/>
    <property type="project" value="Ensembl"/>
</dbReference>
<dbReference type="GO" id="GO:0010976">
    <property type="term" value="P:positive regulation of neuron projection development"/>
    <property type="evidence" value="ECO:0007669"/>
    <property type="project" value="Ensembl"/>
</dbReference>
<dbReference type="GO" id="GO:1903078">
    <property type="term" value="P:positive regulation of protein localization to plasma membrane"/>
    <property type="evidence" value="ECO:0000314"/>
    <property type="project" value="BHF-UCL"/>
</dbReference>
<dbReference type="GO" id="GO:0050714">
    <property type="term" value="P:positive regulation of protein secretion"/>
    <property type="evidence" value="ECO:0007669"/>
    <property type="project" value="Ensembl"/>
</dbReference>
<dbReference type="GO" id="GO:0034394">
    <property type="term" value="P:protein localization to cell surface"/>
    <property type="evidence" value="ECO:0000314"/>
    <property type="project" value="BHF-UCL"/>
</dbReference>
<dbReference type="GO" id="GO:1905345">
    <property type="term" value="P:protein localization to cleavage furrow"/>
    <property type="evidence" value="ECO:0007669"/>
    <property type="project" value="Ensembl"/>
</dbReference>
<dbReference type="GO" id="GO:0036010">
    <property type="term" value="P:protein localization to endosome"/>
    <property type="evidence" value="ECO:0000315"/>
    <property type="project" value="UniProtKB"/>
</dbReference>
<dbReference type="GO" id="GO:0072659">
    <property type="term" value="P:protein localization to plasma membrane"/>
    <property type="evidence" value="ECO:0007669"/>
    <property type="project" value="Ensembl"/>
</dbReference>
<dbReference type="GO" id="GO:0015031">
    <property type="term" value="P:protein transport"/>
    <property type="evidence" value="ECO:0000304"/>
    <property type="project" value="MGI"/>
</dbReference>
<dbReference type="GO" id="GO:0060998">
    <property type="term" value="P:regulation of dendritic spine development"/>
    <property type="evidence" value="ECO:0000315"/>
    <property type="project" value="UniProtKB"/>
</dbReference>
<dbReference type="GO" id="GO:0051489">
    <property type="term" value="P:regulation of filopodium assembly"/>
    <property type="evidence" value="ECO:0007669"/>
    <property type="project" value="Ensembl"/>
</dbReference>
<dbReference type="GO" id="GO:0010975">
    <property type="term" value="P:regulation of neuron projection development"/>
    <property type="evidence" value="ECO:0000315"/>
    <property type="project" value="MGI"/>
</dbReference>
<dbReference type="GO" id="GO:1905606">
    <property type="term" value="P:regulation of presynapse assembly"/>
    <property type="evidence" value="ECO:0007669"/>
    <property type="project" value="Ensembl"/>
</dbReference>
<dbReference type="GO" id="GO:0035020">
    <property type="term" value="P:regulation of Rac protein signal transduction"/>
    <property type="evidence" value="ECO:0007669"/>
    <property type="project" value="Ensembl"/>
</dbReference>
<dbReference type="GO" id="GO:0034143">
    <property type="term" value="P:regulation of toll-like receptor 4 signaling pathway"/>
    <property type="evidence" value="ECO:0000303"/>
    <property type="project" value="BHF-UCL"/>
</dbReference>
<dbReference type="GO" id="GO:0097178">
    <property type="term" value="P:ruffle assembly"/>
    <property type="evidence" value="ECO:0007669"/>
    <property type="project" value="Ensembl"/>
</dbReference>
<dbReference type="GO" id="GO:0048488">
    <property type="term" value="P:synaptic vesicle endocytosis"/>
    <property type="evidence" value="ECO:0007669"/>
    <property type="project" value="Ensembl"/>
</dbReference>
<dbReference type="CDD" id="cd04149">
    <property type="entry name" value="Arf6"/>
    <property type="match status" value="1"/>
</dbReference>
<dbReference type="FunFam" id="3.40.50.300:FF:000286">
    <property type="entry name" value="ADP-ribosylation factor 6"/>
    <property type="match status" value="1"/>
</dbReference>
<dbReference type="Gene3D" id="3.40.50.300">
    <property type="entry name" value="P-loop containing nucleotide triphosphate hydrolases"/>
    <property type="match status" value="1"/>
</dbReference>
<dbReference type="InterPro" id="IPR041838">
    <property type="entry name" value="Arf6"/>
</dbReference>
<dbReference type="InterPro" id="IPR027417">
    <property type="entry name" value="P-loop_NTPase"/>
</dbReference>
<dbReference type="InterPro" id="IPR005225">
    <property type="entry name" value="Small_GTP-bd"/>
</dbReference>
<dbReference type="InterPro" id="IPR024156">
    <property type="entry name" value="Small_GTPase_ARF"/>
</dbReference>
<dbReference type="InterPro" id="IPR006689">
    <property type="entry name" value="Small_GTPase_ARF/SAR"/>
</dbReference>
<dbReference type="NCBIfam" id="TIGR00231">
    <property type="entry name" value="small_GTP"/>
    <property type="match status" value="1"/>
</dbReference>
<dbReference type="PANTHER" id="PTHR11711">
    <property type="entry name" value="ADP RIBOSYLATION FACTOR-RELATED"/>
    <property type="match status" value="1"/>
</dbReference>
<dbReference type="Pfam" id="PF00025">
    <property type="entry name" value="Arf"/>
    <property type="match status" value="1"/>
</dbReference>
<dbReference type="PRINTS" id="PR00328">
    <property type="entry name" value="SAR1GTPBP"/>
</dbReference>
<dbReference type="SMART" id="SM00177">
    <property type="entry name" value="ARF"/>
    <property type="match status" value="1"/>
</dbReference>
<dbReference type="SMART" id="SM00175">
    <property type="entry name" value="RAB"/>
    <property type="match status" value="1"/>
</dbReference>
<dbReference type="SMART" id="SM00178">
    <property type="entry name" value="SAR"/>
    <property type="match status" value="1"/>
</dbReference>
<dbReference type="SUPFAM" id="SSF52540">
    <property type="entry name" value="P-loop containing nucleoside triphosphate hydrolases"/>
    <property type="match status" value="1"/>
</dbReference>
<dbReference type="PROSITE" id="PS51417">
    <property type="entry name" value="ARF"/>
    <property type="match status" value="1"/>
</dbReference>
<organism>
    <name type="scientific">Mus musculus</name>
    <name type="common">Mouse</name>
    <dbReference type="NCBI Taxonomy" id="10090"/>
    <lineage>
        <taxon>Eukaryota</taxon>
        <taxon>Metazoa</taxon>
        <taxon>Chordata</taxon>
        <taxon>Craniata</taxon>
        <taxon>Vertebrata</taxon>
        <taxon>Euteleostomi</taxon>
        <taxon>Mammalia</taxon>
        <taxon>Eutheria</taxon>
        <taxon>Euarchontoglires</taxon>
        <taxon>Glires</taxon>
        <taxon>Rodentia</taxon>
        <taxon>Myomorpha</taxon>
        <taxon>Muroidea</taxon>
        <taxon>Muridae</taxon>
        <taxon>Murinae</taxon>
        <taxon>Mus</taxon>
        <taxon>Mus</taxon>
    </lineage>
</organism>
<comment type="function">
    <text evidence="2 3 4 5 6 8 10">GTP-binding protein involved in protein trafficking that regulates endocytic recycling and cytoskeleton remodeling (PubMed:11950392). Required for normal completion of mitotic cytokinesis. Involved in the regulation of dendritic spine development, contributing to the regulation of dendritic branching and filopodia extension. Plays an important role in membrane trafficking, during junctional remodeling and epithelial polarization. Regulates surface levels of adherens junction proteins such as CDH1 (PubMed:20080746, PubMed:29420262). Required for NTRK1 sorting to the recycling pathway from early endosomes (By similarity).</text>
</comment>
<comment type="catalytic activity">
    <reaction evidence="1">
        <text>GTP + H2O = GDP + phosphate + H(+)</text>
        <dbReference type="Rhea" id="RHEA:19669"/>
        <dbReference type="ChEBI" id="CHEBI:15377"/>
        <dbReference type="ChEBI" id="CHEBI:15378"/>
        <dbReference type="ChEBI" id="CHEBI:37565"/>
        <dbReference type="ChEBI" id="CHEBI:43474"/>
        <dbReference type="ChEBI" id="CHEBI:58189"/>
        <dbReference type="EC" id="3.6.5.2"/>
    </reaction>
    <physiologicalReaction direction="left-to-right" evidence="1">
        <dbReference type="Rhea" id="RHEA:19670"/>
    </physiologicalReaction>
</comment>
<comment type="activity regulation">
    <text evidence="1 2">Activation is generally mediated by guanine exchange factor (GEF), while inactivation through hydrolysis of bound GTP is catalyzed by GTPases activating protein (GAP). Inactivated by ACAP1 and ACAP2 (By similarity). Activated by NGF via NTRK1 (By similarity).</text>
</comment>
<comment type="subunit">
    <text evidence="1 2 3 6 7 9">Interacts (when activated) with GGA1, GGA2 and GGA3; the interaction is required for proper subcellular location of GGA1, GGA2 and GGA3 (PubMed:11950392, PubMed:22522702). Interacts with ARHGAP21, ASAP2, HERC1, PIP5K1C and UACA. Interacts with NCS1/FREQ at the plasma membrane. Interacts with RAB11FIP3. Interacts with USP6 (via Rab-GAP TBC domain). Interacts with ECPAS. Interacts with TBC1D24. Interacts with MICALL1. Interacts with CYTH3 (By similarity). Interacts with KIF23, forming heterodimers and heterotetramers. Interacts with SPAG9 and RAB11FIP4 (PubMed:22522702). Interacts with C9orf72 (PubMed:27723745). Interacts (GTP-bound form) with TJAP1/PILT (PubMed:22841714).</text>
</comment>
<comment type="interaction">
    <interactant intactId="EBI-988682">
        <id>P62331</id>
    </interactant>
    <interactant intactId="EBI-301496">
        <id>Q9ESN9</id>
        <label>Mapk8ip3</label>
    </interactant>
    <organismsDiffer>false</organismsDiffer>
    <experiments>8</experiments>
</comment>
<comment type="interaction">
    <interactant intactId="EBI-988682">
        <id>P62331</id>
    </interactant>
    <interactant intactId="EBI-6530207">
        <id>Q58A65</id>
        <label>Spag9</label>
    </interactant>
    <organismsDiffer>false</organismsDiffer>
    <experiments>10</experiments>
</comment>
<comment type="interaction">
    <interactant intactId="EBI-988682">
        <id>P62331</id>
    </interactant>
    <interactant intactId="EBI-775733">
        <id>Q9DCD5</id>
        <label>Tjap1</label>
    </interactant>
    <organismsDiffer>false</organismsDiffer>
    <experiments>2</experiments>
</comment>
<comment type="interaction">
    <interactant intactId="EBI-988682">
        <id>P62331</id>
    </interactant>
    <interactant intactId="EBI-447141">
        <id>Q9UJY5</id>
        <label>GGA1</label>
    </interactant>
    <organismsDiffer>true</organismsDiffer>
    <experiments>2</experiments>
</comment>
<comment type="interaction">
    <interactant intactId="EBI-988682">
        <id>P62331</id>
    </interactant>
    <interactant intactId="EBI-306852">
        <id>Q02241</id>
        <label>KIF23</label>
    </interactant>
    <organismsDiffer>true</organismsDiffer>
    <experiments>10</experiments>
</comment>
<comment type="interaction">
    <interactant intactId="EBI-988682">
        <id>P62331</id>
    </interactant>
    <interactant intactId="EBI-949727">
        <id>Q86YS3</id>
        <label>RAB11FIP4</label>
    </interactant>
    <organismsDiffer>true</organismsDiffer>
    <experiments>2</experiments>
</comment>
<comment type="interaction">
    <interactant intactId="EBI-988682">
        <id>P62331</id>
    </interactant>
    <interactant intactId="EBI-1023301">
        <id>O60271</id>
        <label>SPAG9</label>
    </interactant>
    <organismsDiffer>true</organismsDiffer>
    <experiments>2</experiments>
</comment>
<comment type="subcellular location">
    <subcellularLocation>
        <location evidence="1">Cytoplasm</location>
        <location evidence="1">Cytosol</location>
    </subcellularLocation>
    <subcellularLocation>
        <location evidence="10">Cell membrane</location>
        <topology evidence="1">Lipid-anchor</topology>
    </subcellularLocation>
    <subcellularLocation>
        <location>Endosome membrane</location>
        <topology evidence="1">Lipid-anchor</topology>
    </subcellularLocation>
    <subcellularLocation>
        <location evidence="1">Recycling endosome membrane</location>
        <topology evidence="1">Lipid-anchor</topology>
    </subcellularLocation>
    <subcellularLocation>
        <location evidence="1">Cell projection</location>
        <location evidence="1">Filopodium membrane</location>
        <topology evidence="1">Lipid-anchor</topology>
    </subcellularLocation>
    <subcellularLocation>
        <location evidence="1">Cell projection</location>
        <location evidence="1">Ruffle</location>
    </subcellularLocation>
    <subcellularLocation>
        <location evidence="1">Cleavage furrow</location>
    </subcellularLocation>
    <subcellularLocation>
        <location evidence="6">Midbody</location>
        <location evidence="6">Midbody ring</location>
    </subcellularLocation>
    <subcellularLocation>
        <location evidence="3">Early endosome membrane</location>
        <topology evidence="12">Lipid-anchor</topology>
    </subcellularLocation>
    <subcellularLocation>
        <location evidence="3">Golgi apparatus</location>
        <location evidence="3">trans-Golgi network membrane</location>
        <topology evidence="12">Lipid-anchor</topology>
    </subcellularLocation>
    <text evidence="1 6">Distributed uniformly on the plasma membrane, as well as throughout the cytoplasm during metaphase (By similarity). Subsequently concentrated at patches in the equatorial region at the onset of cytokinesis, and becomes distributed in the equatorial region concurrent with cleavage furrow ingression (By similarity). In late stages of cytokinesis, concentrates at the midbody ring/Flemming body (By similarity). Recruitment to the midbody ring requires both activation by PSD/EFA6A and interaction with KIF23/MKLP1 (By similarity). After abscission of the intercellular bridge, incorporated into one of the daughter cells as a midbody remnant and localizes to punctate structures beneath the plasma membrane (PubMed:22522702). Recruited to the cell membrane in association with CYTH2 and ARL4C (By similarity). Colocalizes with DAB2IP at the plasma membrane and endocytic vesicles (By similarity). Myristoylation is required for proper localization to membranes: myristoylation on Lys-3 allows ARF6 to remain on membranes during the GTPase cycle (By similarity).</text>
</comment>
<comment type="tissue specificity">
    <text evidence="11">Widely expressed.</text>
</comment>
<comment type="PTM">
    <text evidence="1">GTP-bound form is myristoylated on Lys-3 by NMT1 and NMT2, allowing ARF6 to remain on membranes during the GTPase cycle, thereby promoting its activity. GDP-bound inactive form is demyristoylated on Lys-3 by SIRT2 at early endosomes or endocytic recycling compartment to allow its efficient activation by a guanine exchange factor (GEF) after GDP release.</text>
</comment>
<comment type="similarity">
    <text evidence="12">Belongs to the small GTPase superfamily. Arf family.</text>
</comment>
<reference key="1">
    <citation type="journal article" date="1996" name="J. Biochem.">
        <title>Structure and intracellular localization of mouse ADP-ribosylation factors type 1 to type 6 (ARF1-ARF6).</title>
        <authorList>
            <person name="Hosaka M."/>
            <person name="Toda K."/>
            <person name="Takatsu H."/>
            <person name="Torii S."/>
            <person name="Murakami K."/>
            <person name="Nakayama K."/>
        </authorList>
    </citation>
    <scope>NUCLEOTIDE SEQUENCE [MRNA]</scope>
    <scope>SUBCELLULAR LOCATION</scope>
    <scope>TISSUE SPECIFICITY</scope>
    <source>
        <strain>ICR</strain>
        <tissue>Brain</tissue>
    </source>
</reference>
<reference key="2">
    <citation type="journal article" date="2004" name="Genome Res.">
        <title>The status, quality, and expansion of the NIH full-length cDNA project: the Mammalian Gene Collection (MGC).</title>
        <authorList>
            <consortium name="The MGC Project Team"/>
        </authorList>
    </citation>
    <scope>NUCLEOTIDE SEQUENCE [LARGE SCALE MRNA]</scope>
    <source>
        <strain>FVB/N</strain>
        <tissue>Mammary tumor</tissue>
    </source>
</reference>
<reference key="3">
    <citation type="journal article" date="2002" name="Biochem. J.">
        <title>GGA proteins associate with Golgi membranes through interaction between their GGAH domains and ADP-ribosylation factors.</title>
        <authorList>
            <person name="Takatsu H."/>
            <person name="Yoshino K."/>
            <person name="Toda K."/>
            <person name="Nakayama K."/>
        </authorList>
    </citation>
    <scope>INTERACTION WITH GGA1; GGA2 AND GGA3</scope>
    <scope>SUBCELLULAR LOCATION</scope>
</reference>
<reference key="4">
    <citation type="journal article" date="2005" name="FEBS Lett.">
        <title>The small GTPase ADP-ribosylation factor 6 negatively regulates dendritic spine formation.</title>
        <authorList>
            <person name="Miyazaki H."/>
            <person name="Yamazaki M."/>
            <person name="Watanabe H."/>
            <person name="Maehama T."/>
            <person name="Yokozeki T."/>
            <person name="Kanaho Y."/>
        </authorList>
    </citation>
    <scope>FUNCTION AS REGULATOR OF DENDRITIC SPINE DEVELOPMENT</scope>
</reference>
<reference key="5">
    <citation type="journal article" date="2010" name="Cell">
        <title>A tissue-specific atlas of mouse protein phosphorylation and expression.</title>
        <authorList>
            <person name="Huttlin E.L."/>
            <person name="Jedrychowski M.P."/>
            <person name="Elias J.E."/>
            <person name="Goswami T."/>
            <person name="Rad R."/>
            <person name="Beausoleil S.A."/>
            <person name="Villen J."/>
            <person name="Haas W."/>
            <person name="Sowa M.E."/>
            <person name="Gygi S.P."/>
        </authorList>
    </citation>
    <scope>IDENTIFICATION BY MASS SPECTROMETRY [LARGE SCALE ANALYSIS]</scope>
    <source>
        <tissue>Brain</tissue>
        <tissue>Brown adipose tissue</tissue>
        <tissue>Heart</tissue>
        <tissue>Kidney</tissue>
        <tissue>Liver</tissue>
        <tissue>Lung</tissue>
        <tissue>Pancreas</tissue>
        <tissue>Spleen</tissue>
        <tissue>Testis</tissue>
    </source>
</reference>
<reference key="6">
    <citation type="journal article" date="2010" name="Proc. Natl. Acad. Sci. U.S.A.">
        <title>FRMD4A regulates epithelial polarity by connecting Arf6 activation with the PAR complex.</title>
        <authorList>
            <person name="Ikenouchi J."/>
            <person name="Umeda M."/>
        </authorList>
    </citation>
    <scope>FUNCTION</scope>
    <scope>MUTAGENESIS OF THR-27</scope>
</reference>
<reference key="7">
    <citation type="journal article" date="2012" name="FEBS Lett.">
        <title>Pilt is a coiled-coil domain-containing protein that localizes at the trans-Golgi complex and regulates its structure.</title>
        <authorList>
            <person name="Tamaki H."/>
            <person name="Sanda M."/>
            <person name="Katsumata O."/>
            <person name="Hara Y."/>
            <person name="Fukaya M."/>
            <person name="Sakagami H."/>
        </authorList>
    </citation>
    <scope>INTERACTION WITH TJAP1</scope>
    <scope>MUTAGENESIS OF THR-44 AND GLN-67</scope>
</reference>
<reference key="8">
    <citation type="journal article" date="2013" name="J. Cell Sci.">
        <title>Rab35 establishes the EHD1-association site by coordinating two distinct effectors during neurite outgrowth.</title>
        <authorList>
            <person name="Kobayashi H."/>
            <person name="Fukuda M."/>
        </authorList>
    </citation>
    <scope>FUNCTION IN NEURITE OUTGROWTH</scope>
    <scope>MUTAGENESIS OF GLN-67</scope>
</reference>
<reference key="9">
    <citation type="journal article" date="2016" name="Nat. Neurosci.">
        <title>C9ORF72 interaction with cofilin modulates actin dynamics in motor neurons.</title>
        <authorList>
            <person name="Sivadasan R."/>
            <person name="Hornburg D."/>
            <person name="Drepper C."/>
            <person name="Frank N."/>
            <person name="Jablonka S."/>
            <person name="Hansel A."/>
            <person name="Lojewski X."/>
            <person name="Sterneckert J."/>
            <person name="Hermann A."/>
            <person name="Shaw P.J."/>
            <person name="Ince P.G."/>
            <person name="Mann M."/>
            <person name="Meissner F."/>
            <person name="Sendtner M."/>
        </authorList>
    </citation>
    <scope>INTERACTION WITH C9ORF72</scope>
</reference>
<reference key="10">
    <citation type="journal article" date="2018" name="Science">
        <title>C1orf106 is a colitis risk gene that regulates stability of epithelial adherens junctions.</title>
        <authorList>
            <person name="Mohanan V."/>
            <person name="Nakata T."/>
            <person name="Desch A.N."/>
            <person name="Levesque C."/>
            <person name="Boroughs A."/>
            <person name="Guzman G."/>
            <person name="Cao Z."/>
            <person name="Creasey E."/>
            <person name="Yao J."/>
            <person name="Boucher G."/>
            <person name="Charron G."/>
            <person name="Bhan A.K."/>
            <person name="Schenone M."/>
            <person name="Carr S.A."/>
            <person name="Reinecker H.C."/>
            <person name="Daly M.J."/>
            <person name="Rioux J.D."/>
            <person name="Lassen K.G."/>
            <person name="Xavier R.J."/>
        </authorList>
    </citation>
    <scope>FUNCTION</scope>
    <scope>SUBCELLULAR LOCATION</scope>
</reference>
<reference key="11">
    <citation type="journal article" date="2012" name="EMBO J.">
        <title>Structural basis for Arf6-MKLP1 complex formation on the Flemming body responsible for cytokinesis.</title>
        <authorList>
            <person name="Makyio H."/>
            <person name="Ohgi M."/>
            <person name="Takei T."/>
            <person name="Takahashi S."/>
            <person name="Takatsu H."/>
            <person name="Katoh Y."/>
            <person name="Hanai A."/>
            <person name="Ueda T."/>
            <person name="Kanaho Y."/>
            <person name="Xie Y."/>
            <person name="Shin H.W."/>
            <person name="Kamikubo H."/>
            <person name="Kataoka M."/>
            <person name="Kawasaki M."/>
            <person name="Kato R."/>
            <person name="Wakatsuki S."/>
            <person name="Nakayama K."/>
        </authorList>
    </citation>
    <scope>X-RAY CRYSTALLOGRAPHY (2.81 ANGSTROMS) OF 13-175 IN COMPLEX WITH GTP AND KIF23</scope>
    <scope>INTERACTION WITH KIF23; RAB11FIP4; GGA1 AND SPAG9</scope>
    <scope>FUNCTION</scope>
    <scope>MUTAGENESIS OF THR-27; GLN-67; HIS-76 AND TYR-77</scope>
    <scope>SUBCELLULAR LOCATION</scope>
</reference>
<gene>
    <name type="primary">Arf6</name>
</gene>
<protein>
    <recommendedName>
        <fullName>ADP-ribosylation factor 6</fullName>
        <ecNumber evidence="1">3.6.5.2</ecNumber>
    </recommendedName>
</protein>
<feature type="initiator methionine" description="Removed" evidence="1">
    <location>
        <position position="1"/>
    </location>
</feature>
<feature type="chain" id="PRO_0000207401" description="ADP-ribosylation factor 6">
    <location>
        <begin position="2"/>
        <end position="175"/>
    </location>
</feature>
<feature type="binding site" evidence="6">
    <location>
        <begin position="23"/>
        <end position="28"/>
    </location>
    <ligand>
        <name>GTP</name>
        <dbReference type="ChEBI" id="CHEBI:37565"/>
    </ligand>
</feature>
<feature type="binding site" evidence="1">
    <location>
        <begin position="41"/>
        <end position="44"/>
    </location>
    <ligand>
        <name>GTP</name>
        <dbReference type="ChEBI" id="CHEBI:37565"/>
    </ligand>
</feature>
<feature type="binding site" evidence="6">
    <location>
        <begin position="63"/>
        <end position="67"/>
    </location>
    <ligand>
        <name>GTP</name>
        <dbReference type="ChEBI" id="CHEBI:37565"/>
    </ligand>
</feature>
<feature type="binding site" evidence="6">
    <location>
        <begin position="122"/>
        <end position="125"/>
    </location>
    <ligand>
        <name>GTP</name>
        <dbReference type="ChEBI" id="CHEBI:37565"/>
    </ligand>
</feature>
<feature type="binding site" evidence="1">
    <location>
        <begin position="155"/>
        <end position="156"/>
    </location>
    <ligand>
        <name>GTP</name>
        <dbReference type="ChEBI" id="CHEBI:37565"/>
    </ligand>
</feature>
<feature type="lipid moiety-binding region" description="N-myristoyl glycine" evidence="1">
    <location>
        <position position="2"/>
    </location>
</feature>
<feature type="lipid moiety-binding region" description="N6-myristoyl lysine" evidence="1">
    <location>
        <position position="3"/>
    </location>
</feature>
<feature type="mutagenesis site" description="Loss of activity; delays formation of epithelial polarity." evidence="5 6">
    <original>T</original>
    <variation>N</variation>
    <location>
        <position position="27"/>
    </location>
</feature>
<feature type="mutagenesis site" description="Inactive GDP-bound form which does not bind TJAP1." evidence="7">
    <original>T</original>
    <variation>N</variation>
    <location>
        <position position="44"/>
    </location>
</feature>
<feature type="mutagenesis site" description="Probable constitutively active mutant that prevents EHD1 localization to endosome membranes. No effect on interaction with TJAP1." evidence="6 7 8">
    <original>Q</original>
    <variation>L</variation>
    <location>
        <position position="67"/>
    </location>
</feature>
<feature type="mutagenesis site" description="Slightly impaired interaction with KIF23. Abolishes interaction with GGA1, SPAG9 and RAB11FIP4." evidence="6">
    <original>H</original>
    <variation>A</variation>
    <location>
        <position position="76"/>
    </location>
</feature>
<feature type="mutagenesis site" description="Loss of interaction with KIF23, GGA1, SPAG9 and RAB11FIP4." evidence="6">
    <original>Y</original>
    <variation>A</variation>
    <location>
        <position position="77"/>
    </location>
</feature>
<feature type="strand" evidence="13">
    <location>
        <begin position="13"/>
        <end position="19"/>
    </location>
</feature>
<feature type="helix" evidence="13">
    <location>
        <begin position="26"/>
        <end position="35"/>
    </location>
</feature>
<feature type="strand" evidence="13">
    <location>
        <begin position="45"/>
        <end position="54"/>
    </location>
</feature>
<feature type="strand" evidence="13">
    <location>
        <begin position="57"/>
        <end position="64"/>
    </location>
</feature>
<feature type="turn" evidence="13">
    <location>
        <begin position="68"/>
        <end position="70"/>
    </location>
</feature>
<feature type="helix" evidence="13">
    <location>
        <begin position="71"/>
        <end position="77"/>
    </location>
</feature>
<feature type="strand" evidence="13">
    <location>
        <begin position="82"/>
        <end position="89"/>
    </location>
</feature>
<feature type="helix" evidence="13">
    <location>
        <begin position="96"/>
        <end position="107"/>
    </location>
</feature>
<feature type="helix" evidence="13">
    <location>
        <begin position="110"/>
        <end position="112"/>
    </location>
</feature>
<feature type="strand" evidence="13">
    <location>
        <begin position="116"/>
        <end position="122"/>
    </location>
</feature>
<feature type="helix" evidence="13">
    <location>
        <begin position="132"/>
        <end position="138"/>
    </location>
</feature>
<feature type="strand" evidence="13">
    <location>
        <begin position="149"/>
        <end position="153"/>
    </location>
</feature>
<feature type="turn" evidence="13">
    <location>
        <begin position="156"/>
        <end position="159"/>
    </location>
</feature>
<feature type="helix" evidence="13">
    <location>
        <begin position="162"/>
        <end position="171"/>
    </location>
</feature>
<sequence length="175" mass="20082">MGKVLSKIFGNKEMRILMLGLDAAGKTTILYKLKLGQSVTTIPTVGFNVETVTYKNVKFNVWDVGGQDKIRPLWRHYYTGTQGLIFVVDCADRDRIDEARQELHRIINDREMRDAIILIFANKQDLPDAMKPHEIQEKLGLTRIRDRNWYVQPSCATSGDGLYEGLTWLTSNYKS</sequence>
<proteinExistence type="evidence at protein level"/>
<keyword id="KW-0002">3D-structure</keyword>
<keyword id="KW-0131">Cell cycle</keyword>
<keyword id="KW-0132">Cell division</keyword>
<keyword id="KW-1003">Cell membrane</keyword>
<keyword id="KW-0966">Cell projection</keyword>
<keyword id="KW-0963">Cytoplasm</keyword>
<keyword id="KW-0221">Differentiation</keyword>
<keyword id="KW-0967">Endosome</keyword>
<keyword id="KW-0333">Golgi apparatus</keyword>
<keyword id="KW-0342">GTP-binding</keyword>
<keyword id="KW-0378">Hydrolase</keyword>
<keyword id="KW-0449">Lipoprotein</keyword>
<keyword id="KW-0472">Membrane</keyword>
<keyword id="KW-0519">Myristate</keyword>
<keyword id="KW-0524">Neurogenesis</keyword>
<keyword id="KW-0547">Nucleotide-binding</keyword>
<keyword id="KW-0653">Protein transport</keyword>
<keyword id="KW-1185">Reference proteome</keyword>
<keyword id="KW-0813">Transport</keyword>
<evidence type="ECO:0000250" key="1">
    <source>
        <dbReference type="UniProtKB" id="P62330"/>
    </source>
</evidence>
<evidence type="ECO:0000250" key="2">
    <source>
        <dbReference type="UniProtKB" id="P62332"/>
    </source>
</evidence>
<evidence type="ECO:0000269" key="3">
    <source>
    </source>
</evidence>
<evidence type="ECO:0000269" key="4">
    <source>
    </source>
</evidence>
<evidence type="ECO:0000269" key="5">
    <source>
    </source>
</evidence>
<evidence type="ECO:0000269" key="6">
    <source>
    </source>
</evidence>
<evidence type="ECO:0000269" key="7">
    <source>
    </source>
</evidence>
<evidence type="ECO:0000269" key="8">
    <source>
    </source>
</evidence>
<evidence type="ECO:0000269" key="9">
    <source>
    </source>
</evidence>
<evidence type="ECO:0000269" key="10">
    <source>
    </source>
</evidence>
<evidence type="ECO:0000269" key="11">
    <source>
    </source>
</evidence>
<evidence type="ECO:0000305" key="12"/>
<evidence type="ECO:0007829" key="13">
    <source>
        <dbReference type="PDB" id="3VHX"/>
    </source>
</evidence>